<dbReference type="EC" id="2.7.7.3" evidence="1"/>
<dbReference type="EMBL" id="AE009950">
    <property type="protein sequence ID" value="AAL81208.1"/>
    <property type="molecule type" value="Genomic_DNA"/>
</dbReference>
<dbReference type="RefSeq" id="WP_011012221.1">
    <property type="nucleotide sequence ID" value="NZ_CP023154.1"/>
</dbReference>
<dbReference type="SMR" id="Q8U1X0"/>
<dbReference type="STRING" id="186497.PF1084"/>
<dbReference type="PaxDb" id="186497-PF1084"/>
<dbReference type="GeneID" id="41712891"/>
<dbReference type="KEGG" id="pfu:PF1084"/>
<dbReference type="PATRIC" id="fig|186497.12.peg.1143"/>
<dbReference type="eggNOG" id="arCOG01223">
    <property type="taxonomic scope" value="Archaea"/>
</dbReference>
<dbReference type="HOGENOM" id="CLU_035272_5_0_2"/>
<dbReference type="OrthoDB" id="53228at2157"/>
<dbReference type="PhylomeDB" id="Q8U1X0"/>
<dbReference type="UniPathway" id="UPA00241"/>
<dbReference type="Proteomes" id="UP000001013">
    <property type="component" value="Chromosome"/>
</dbReference>
<dbReference type="GO" id="GO:0005737">
    <property type="term" value="C:cytoplasm"/>
    <property type="evidence" value="ECO:0007669"/>
    <property type="project" value="UniProtKB-SubCell"/>
</dbReference>
<dbReference type="GO" id="GO:0005524">
    <property type="term" value="F:ATP binding"/>
    <property type="evidence" value="ECO:0007669"/>
    <property type="project" value="UniProtKB-KW"/>
</dbReference>
<dbReference type="GO" id="GO:0004140">
    <property type="term" value="F:dephospho-CoA kinase activity"/>
    <property type="evidence" value="ECO:0007669"/>
    <property type="project" value="TreeGrafter"/>
</dbReference>
<dbReference type="GO" id="GO:0004595">
    <property type="term" value="F:pantetheine-phosphate adenylyltransferase activity"/>
    <property type="evidence" value="ECO:0007669"/>
    <property type="project" value="UniProtKB-UniRule"/>
</dbReference>
<dbReference type="GO" id="GO:0015937">
    <property type="term" value="P:coenzyme A biosynthetic process"/>
    <property type="evidence" value="ECO:0007669"/>
    <property type="project" value="UniProtKB-UniRule"/>
</dbReference>
<dbReference type="CDD" id="cd02164">
    <property type="entry name" value="PPAT_CoAS"/>
    <property type="match status" value="1"/>
</dbReference>
<dbReference type="Gene3D" id="3.40.50.620">
    <property type="entry name" value="HUPs"/>
    <property type="match status" value="1"/>
</dbReference>
<dbReference type="HAMAP" id="MF_00647">
    <property type="entry name" value="PPAT_arch"/>
    <property type="match status" value="1"/>
</dbReference>
<dbReference type="InterPro" id="IPR054937">
    <property type="entry name" value="CoaD_Thcocales"/>
</dbReference>
<dbReference type="InterPro" id="IPR004821">
    <property type="entry name" value="Cyt_trans-like"/>
</dbReference>
<dbReference type="InterPro" id="IPR023540">
    <property type="entry name" value="PPAT_arch"/>
</dbReference>
<dbReference type="InterPro" id="IPR014729">
    <property type="entry name" value="Rossmann-like_a/b/a_fold"/>
</dbReference>
<dbReference type="NCBIfam" id="NF041124">
    <property type="entry name" value="CoaD_Thcocales"/>
    <property type="match status" value="1"/>
</dbReference>
<dbReference type="NCBIfam" id="TIGR00125">
    <property type="entry name" value="cyt_tran_rel"/>
    <property type="match status" value="1"/>
</dbReference>
<dbReference type="NCBIfam" id="NF001985">
    <property type="entry name" value="PRK00777.1"/>
    <property type="match status" value="1"/>
</dbReference>
<dbReference type="PANTHER" id="PTHR10695:SF46">
    <property type="entry name" value="BIFUNCTIONAL COENZYME A SYNTHASE-RELATED"/>
    <property type="match status" value="1"/>
</dbReference>
<dbReference type="PANTHER" id="PTHR10695">
    <property type="entry name" value="DEPHOSPHO-COA KINASE-RELATED"/>
    <property type="match status" value="1"/>
</dbReference>
<dbReference type="Pfam" id="PF01467">
    <property type="entry name" value="CTP_transf_like"/>
    <property type="match status" value="1"/>
</dbReference>
<dbReference type="SUPFAM" id="SSF52374">
    <property type="entry name" value="Nucleotidylyl transferase"/>
    <property type="match status" value="1"/>
</dbReference>
<sequence length="160" mass="18428">MKKKYKKVVVGGTFDRLHLGHKALLRKAFEVGEIVYIGLTSDEMIKEKQYSERILPYEKRLLDLIKFLEVNKYRNYRIMKIHNAIGFTTKIKSLEAIVVSEETYKGAVLVNKAREELGLRPLDIVVIPIIRSRLGCKISSSLIRAGLIDPFGNPIRREEK</sequence>
<name>COAD_PYRFU</name>
<keyword id="KW-0067">ATP-binding</keyword>
<keyword id="KW-0173">Coenzyme A biosynthesis</keyword>
<keyword id="KW-0963">Cytoplasm</keyword>
<keyword id="KW-0547">Nucleotide-binding</keyword>
<keyword id="KW-0548">Nucleotidyltransferase</keyword>
<keyword id="KW-1185">Reference proteome</keyword>
<keyword id="KW-0808">Transferase</keyword>
<proteinExistence type="inferred from homology"/>
<gene>
    <name evidence="1" type="primary">coaD</name>
    <name type="ordered locus">PF1084</name>
</gene>
<feature type="chain" id="PRO_0000156326" description="Phosphopantetheine adenylyltransferase">
    <location>
        <begin position="1"/>
        <end position="160"/>
    </location>
</feature>
<accession>Q8U1X0</accession>
<organism>
    <name type="scientific">Pyrococcus furiosus (strain ATCC 43587 / DSM 3638 / JCM 8422 / Vc1)</name>
    <dbReference type="NCBI Taxonomy" id="186497"/>
    <lineage>
        <taxon>Archaea</taxon>
        <taxon>Methanobacteriati</taxon>
        <taxon>Methanobacteriota</taxon>
        <taxon>Thermococci</taxon>
        <taxon>Thermococcales</taxon>
        <taxon>Thermococcaceae</taxon>
        <taxon>Pyrococcus</taxon>
    </lineage>
</organism>
<comment type="function">
    <text evidence="1">Reversibly transfers an adenylyl group from ATP to 4'-phosphopantetheine, yielding dephospho-CoA (dPCoA) and pyrophosphate.</text>
</comment>
<comment type="catalytic activity">
    <reaction evidence="1">
        <text>(R)-4'-phosphopantetheine + ATP + H(+) = 3'-dephospho-CoA + diphosphate</text>
        <dbReference type="Rhea" id="RHEA:19801"/>
        <dbReference type="ChEBI" id="CHEBI:15378"/>
        <dbReference type="ChEBI" id="CHEBI:30616"/>
        <dbReference type="ChEBI" id="CHEBI:33019"/>
        <dbReference type="ChEBI" id="CHEBI:57328"/>
        <dbReference type="ChEBI" id="CHEBI:61723"/>
        <dbReference type="EC" id="2.7.7.3"/>
    </reaction>
</comment>
<comment type="pathway">
    <text evidence="1">Cofactor biosynthesis; coenzyme A biosynthesis.</text>
</comment>
<comment type="subcellular location">
    <subcellularLocation>
        <location evidence="1">Cytoplasm</location>
    </subcellularLocation>
</comment>
<comment type="similarity">
    <text evidence="1">Belongs to the eukaryotic CoaD family.</text>
</comment>
<protein>
    <recommendedName>
        <fullName evidence="1">Phosphopantetheine adenylyltransferase</fullName>
        <ecNumber evidence="1">2.7.7.3</ecNumber>
    </recommendedName>
    <alternativeName>
        <fullName evidence="1">Dephospho-CoA pyrophosphorylase</fullName>
    </alternativeName>
    <alternativeName>
        <fullName evidence="1">Pantetheine-phosphate adenylyltransferase</fullName>
        <shortName evidence="1">PPAT</shortName>
    </alternativeName>
</protein>
<reference key="1">
    <citation type="journal article" date="1999" name="Genetics">
        <title>Divergence of the hyperthermophilic archaea Pyrococcus furiosus and P. horikoshii inferred from complete genomic sequences.</title>
        <authorList>
            <person name="Maeder D.L."/>
            <person name="Weiss R.B."/>
            <person name="Dunn D.M."/>
            <person name="Cherry J.L."/>
            <person name="Gonzalez J.M."/>
            <person name="DiRuggiero J."/>
            <person name="Robb F.T."/>
        </authorList>
    </citation>
    <scope>NUCLEOTIDE SEQUENCE [LARGE SCALE GENOMIC DNA]</scope>
    <source>
        <strain>ATCC 43587 / DSM 3638 / JCM 8422 / Vc1</strain>
    </source>
</reference>
<evidence type="ECO:0000255" key="1">
    <source>
        <dbReference type="HAMAP-Rule" id="MF_00647"/>
    </source>
</evidence>